<protein>
    <recommendedName>
        <fullName evidence="1">Holo-[acyl-carrier-protein] synthase</fullName>
        <shortName evidence="1">Holo-ACP synthase</shortName>
        <ecNumber evidence="1">2.7.8.7</ecNumber>
    </recommendedName>
    <alternativeName>
        <fullName evidence="1">4'-phosphopantetheinyl transferase AcpS</fullName>
    </alternativeName>
</protein>
<organism>
    <name type="scientific">Roseiflexus castenholzii (strain DSM 13941 / HLO8)</name>
    <dbReference type="NCBI Taxonomy" id="383372"/>
    <lineage>
        <taxon>Bacteria</taxon>
        <taxon>Bacillati</taxon>
        <taxon>Chloroflexota</taxon>
        <taxon>Chloroflexia</taxon>
        <taxon>Chloroflexales</taxon>
        <taxon>Roseiflexineae</taxon>
        <taxon>Roseiflexaceae</taxon>
        <taxon>Roseiflexus</taxon>
    </lineage>
</organism>
<proteinExistence type="inferred from homology"/>
<accession>A7NPN5</accession>
<gene>
    <name evidence="1" type="primary">acpS</name>
    <name type="ordered locus">Rcas_3481</name>
</gene>
<sequence length="136" mass="14685">MIYTGIDIVAVDRIRRAVERWGDRFIQRIFSTAETALCHGRTESLAARWAAKEAVAKLLGVGLRGIGGAGGVAFHDIEALADAHGRPMVILRGAAQARARELGIDSIRLSLSHDHGLAIAIAIALSSPTPRRRMPW</sequence>
<evidence type="ECO:0000255" key="1">
    <source>
        <dbReference type="HAMAP-Rule" id="MF_00101"/>
    </source>
</evidence>
<keyword id="KW-0963">Cytoplasm</keyword>
<keyword id="KW-0275">Fatty acid biosynthesis</keyword>
<keyword id="KW-0276">Fatty acid metabolism</keyword>
<keyword id="KW-0444">Lipid biosynthesis</keyword>
<keyword id="KW-0443">Lipid metabolism</keyword>
<keyword id="KW-0460">Magnesium</keyword>
<keyword id="KW-0479">Metal-binding</keyword>
<keyword id="KW-1185">Reference proteome</keyword>
<keyword id="KW-0808">Transferase</keyword>
<name>ACPS_ROSCS</name>
<reference key="1">
    <citation type="submission" date="2007-08" db="EMBL/GenBank/DDBJ databases">
        <title>Complete sequence of Roseiflexus castenholzii DSM 13941.</title>
        <authorList>
            <consortium name="US DOE Joint Genome Institute"/>
            <person name="Copeland A."/>
            <person name="Lucas S."/>
            <person name="Lapidus A."/>
            <person name="Barry K."/>
            <person name="Glavina del Rio T."/>
            <person name="Dalin E."/>
            <person name="Tice H."/>
            <person name="Pitluck S."/>
            <person name="Thompson L.S."/>
            <person name="Brettin T."/>
            <person name="Bruce D."/>
            <person name="Detter J.C."/>
            <person name="Han C."/>
            <person name="Tapia R."/>
            <person name="Schmutz J."/>
            <person name="Larimer F."/>
            <person name="Land M."/>
            <person name="Hauser L."/>
            <person name="Kyrpides N."/>
            <person name="Mikhailova N."/>
            <person name="Bryant D.A."/>
            <person name="Hanada S."/>
            <person name="Tsukatani Y."/>
            <person name="Richardson P."/>
        </authorList>
    </citation>
    <scope>NUCLEOTIDE SEQUENCE [LARGE SCALE GENOMIC DNA]</scope>
    <source>
        <strain>DSM 13941 / HLO8</strain>
    </source>
</reference>
<dbReference type="EC" id="2.7.8.7" evidence="1"/>
<dbReference type="EMBL" id="CP000804">
    <property type="protein sequence ID" value="ABU59531.1"/>
    <property type="molecule type" value="Genomic_DNA"/>
</dbReference>
<dbReference type="RefSeq" id="WP_012121954.1">
    <property type="nucleotide sequence ID" value="NC_009767.1"/>
</dbReference>
<dbReference type="SMR" id="A7NPN5"/>
<dbReference type="STRING" id="383372.Rcas_3481"/>
<dbReference type="KEGG" id="rca:Rcas_3481"/>
<dbReference type="eggNOG" id="COG0736">
    <property type="taxonomic scope" value="Bacteria"/>
</dbReference>
<dbReference type="HOGENOM" id="CLU_089696_0_2_0"/>
<dbReference type="OrthoDB" id="517356at2"/>
<dbReference type="Proteomes" id="UP000000263">
    <property type="component" value="Chromosome"/>
</dbReference>
<dbReference type="GO" id="GO:0005737">
    <property type="term" value="C:cytoplasm"/>
    <property type="evidence" value="ECO:0007669"/>
    <property type="project" value="UniProtKB-SubCell"/>
</dbReference>
<dbReference type="GO" id="GO:0008897">
    <property type="term" value="F:holo-[acyl-carrier-protein] synthase activity"/>
    <property type="evidence" value="ECO:0007669"/>
    <property type="project" value="UniProtKB-UniRule"/>
</dbReference>
<dbReference type="GO" id="GO:0000287">
    <property type="term" value="F:magnesium ion binding"/>
    <property type="evidence" value="ECO:0007669"/>
    <property type="project" value="UniProtKB-UniRule"/>
</dbReference>
<dbReference type="GO" id="GO:0006633">
    <property type="term" value="P:fatty acid biosynthetic process"/>
    <property type="evidence" value="ECO:0007669"/>
    <property type="project" value="UniProtKB-UniRule"/>
</dbReference>
<dbReference type="Gene3D" id="3.90.470.20">
    <property type="entry name" value="4'-phosphopantetheinyl transferase domain"/>
    <property type="match status" value="1"/>
</dbReference>
<dbReference type="HAMAP" id="MF_00101">
    <property type="entry name" value="AcpS"/>
    <property type="match status" value="1"/>
</dbReference>
<dbReference type="InterPro" id="IPR008278">
    <property type="entry name" value="4-PPantetheinyl_Trfase_dom"/>
</dbReference>
<dbReference type="InterPro" id="IPR037143">
    <property type="entry name" value="4-PPantetheinyl_Trfase_dom_sf"/>
</dbReference>
<dbReference type="InterPro" id="IPR002582">
    <property type="entry name" value="ACPS"/>
</dbReference>
<dbReference type="InterPro" id="IPR004568">
    <property type="entry name" value="Ppantetheine-prot_Trfase_dom"/>
</dbReference>
<dbReference type="NCBIfam" id="TIGR00516">
    <property type="entry name" value="acpS"/>
    <property type="match status" value="1"/>
</dbReference>
<dbReference type="NCBIfam" id="TIGR00556">
    <property type="entry name" value="pantethn_trn"/>
    <property type="match status" value="1"/>
</dbReference>
<dbReference type="Pfam" id="PF01648">
    <property type="entry name" value="ACPS"/>
    <property type="match status" value="1"/>
</dbReference>
<dbReference type="SUPFAM" id="SSF56214">
    <property type="entry name" value="4'-phosphopantetheinyl transferase"/>
    <property type="match status" value="1"/>
</dbReference>
<feature type="chain" id="PRO_1000075654" description="Holo-[acyl-carrier-protein] synthase">
    <location>
        <begin position="1"/>
        <end position="136"/>
    </location>
</feature>
<feature type="binding site" evidence="1">
    <location>
        <position position="7"/>
    </location>
    <ligand>
        <name>Mg(2+)</name>
        <dbReference type="ChEBI" id="CHEBI:18420"/>
    </ligand>
</feature>
<feature type="binding site" evidence="1">
    <location>
        <position position="53"/>
    </location>
    <ligand>
        <name>Mg(2+)</name>
        <dbReference type="ChEBI" id="CHEBI:18420"/>
    </ligand>
</feature>
<comment type="function">
    <text evidence="1">Transfers the 4'-phosphopantetheine moiety from coenzyme A to a Ser of acyl-carrier-protein.</text>
</comment>
<comment type="catalytic activity">
    <reaction evidence="1">
        <text>apo-[ACP] + CoA = holo-[ACP] + adenosine 3',5'-bisphosphate + H(+)</text>
        <dbReference type="Rhea" id="RHEA:12068"/>
        <dbReference type="Rhea" id="RHEA-COMP:9685"/>
        <dbReference type="Rhea" id="RHEA-COMP:9690"/>
        <dbReference type="ChEBI" id="CHEBI:15378"/>
        <dbReference type="ChEBI" id="CHEBI:29999"/>
        <dbReference type="ChEBI" id="CHEBI:57287"/>
        <dbReference type="ChEBI" id="CHEBI:58343"/>
        <dbReference type="ChEBI" id="CHEBI:64479"/>
        <dbReference type="EC" id="2.7.8.7"/>
    </reaction>
</comment>
<comment type="cofactor">
    <cofactor evidence="1">
        <name>Mg(2+)</name>
        <dbReference type="ChEBI" id="CHEBI:18420"/>
    </cofactor>
</comment>
<comment type="subcellular location">
    <subcellularLocation>
        <location evidence="1">Cytoplasm</location>
    </subcellularLocation>
</comment>
<comment type="similarity">
    <text evidence="1">Belongs to the P-Pant transferase superfamily. AcpS family.</text>
</comment>